<reference key="1">
    <citation type="submission" date="2008-10" db="EMBL/GenBank/DDBJ databases">
        <title>Genome sequence of Bacillus cereus G9842.</title>
        <authorList>
            <person name="Dodson R.J."/>
            <person name="Durkin A.S."/>
            <person name="Rosovitz M.J."/>
            <person name="Rasko D.A."/>
            <person name="Hoffmaster A."/>
            <person name="Ravel J."/>
            <person name="Sutton G."/>
        </authorList>
    </citation>
    <scope>NUCLEOTIDE SEQUENCE [LARGE SCALE GENOMIC DNA]</scope>
    <source>
        <strain>G9842</strain>
    </source>
</reference>
<accession>B7IPS5</accession>
<protein>
    <recommendedName>
        <fullName evidence="1">Pyrophosphatase PpaX</fullName>
        <ecNumber evidence="1">3.6.1.1</ecNumber>
    </recommendedName>
</protein>
<sequence>MRINTVLFDLDGTLINTNELIISSFLHTLNTYYPNQYKREDVLPFIGPSLHDTFSKIDESKVEEMITSYREFNHDHHDELVEEYETVYETVRELKKQGYKVGIVTTKARQTVEMGLQLSKLDEFFDVVVTIDDVEHVKPHPEPLQKALELLDAKPEEALMVGDNHHDIVGGQNAGTKTAAVSWTLKGRAYLEAYKPDFMLDKMSDLLPILSNMNRS</sequence>
<keyword id="KW-0378">Hydrolase</keyword>
<keyword id="KW-0460">Magnesium</keyword>
<organism>
    <name type="scientific">Bacillus cereus (strain G9842)</name>
    <dbReference type="NCBI Taxonomy" id="405531"/>
    <lineage>
        <taxon>Bacteria</taxon>
        <taxon>Bacillati</taxon>
        <taxon>Bacillota</taxon>
        <taxon>Bacilli</taxon>
        <taxon>Bacillales</taxon>
        <taxon>Bacillaceae</taxon>
        <taxon>Bacillus</taxon>
        <taxon>Bacillus cereus group</taxon>
    </lineage>
</organism>
<evidence type="ECO:0000255" key="1">
    <source>
        <dbReference type="HAMAP-Rule" id="MF_01250"/>
    </source>
</evidence>
<gene>
    <name evidence="1" type="primary">ppaX</name>
    <name type="ordered locus">BCG9842_B5677</name>
</gene>
<proteinExistence type="inferred from homology"/>
<feature type="chain" id="PRO_1000139924" description="Pyrophosphatase PpaX">
    <location>
        <begin position="1"/>
        <end position="216"/>
    </location>
</feature>
<feature type="active site" description="Nucleophile" evidence="1">
    <location>
        <position position="9"/>
    </location>
</feature>
<name>PPAX_BACC2</name>
<dbReference type="EC" id="3.6.1.1" evidence="1"/>
<dbReference type="EMBL" id="CP001186">
    <property type="protein sequence ID" value="ACK94115.1"/>
    <property type="molecule type" value="Genomic_DNA"/>
</dbReference>
<dbReference type="RefSeq" id="WP_001222403.1">
    <property type="nucleotide sequence ID" value="NC_011772.1"/>
</dbReference>
<dbReference type="SMR" id="B7IPS5"/>
<dbReference type="GeneID" id="67469439"/>
<dbReference type="KEGG" id="bcg:BCG9842_B5677"/>
<dbReference type="HOGENOM" id="CLU_045011_19_3_9"/>
<dbReference type="Proteomes" id="UP000006744">
    <property type="component" value="Chromosome"/>
</dbReference>
<dbReference type="GO" id="GO:0005829">
    <property type="term" value="C:cytosol"/>
    <property type="evidence" value="ECO:0007669"/>
    <property type="project" value="TreeGrafter"/>
</dbReference>
<dbReference type="GO" id="GO:0004427">
    <property type="term" value="F:inorganic diphosphate phosphatase activity"/>
    <property type="evidence" value="ECO:0007669"/>
    <property type="project" value="UniProtKB-UniRule"/>
</dbReference>
<dbReference type="GO" id="GO:0000287">
    <property type="term" value="F:magnesium ion binding"/>
    <property type="evidence" value="ECO:0007669"/>
    <property type="project" value="UniProtKB-UniRule"/>
</dbReference>
<dbReference type="GO" id="GO:0008967">
    <property type="term" value="F:phosphoglycolate phosphatase activity"/>
    <property type="evidence" value="ECO:0007669"/>
    <property type="project" value="TreeGrafter"/>
</dbReference>
<dbReference type="GO" id="GO:0006281">
    <property type="term" value="P:DNA repair"/>
    <property type="evidence" value="ECO:0007669"/>
    <property type="project" value="TreeGrafter"/>
</dbReference>
<dbReference type="CDD" id="cd02616">
    <property type="entry name" value="HAD_PPase"/>
    <property type="match status" value="1"/>
</dbReference>
<dbReference type="FunFam" id="3.40.50.1000:FF:000022">
    <property type="entry name" value="Phosphoglycolate phosphatase"/>
    <property type="match status" value="1"/>
</dbReference>
<dbReference type="FunFam" id="1.10.150.240:FF:000008">
    <property type="entry name" value="Pyrophosphatase PpaX"/>
    <property type="match status" value="1"/>
</dbReference>
<dbReference type="Gene3D" id="3.40.50.1000">
    <property type="entry name" value="HAD superfamily/HAD-like"/>
    <property type="match status" value="1"/>
</dbReference>
<dbReference type="Gene3D" id="1.10.150.240">
    <property type="entry name" value="Putative phosphatase, domain 2"/>
    <property type="match status" value="1"/>
</dbReference>
<dbReference type="HAMAP" id="MF_01250">
    <property type="entry name" value="Pyrophosphat_PpaX"/>
    <property type="match status" value="1"/>
</dbReference>
<dbReference type="InterPro" id="IPR050155">
    <property type="entry name" value="HAD-like_hydrolase_sf"/>
</dbReference>
<dbReference type="InterPro" id="IPR036412">
    <property type="entry name" value="HAD-like_sf"/>
</dbReference>
<dbReference type="InterPro" id="IPR006439">
    <property type="entry name" value="HAD-SF_hydro_IA"/>
</dbReference>
<dbReference type="InterPro" id="IPR006549">
    <property type="entry name" value="HAD-SF_hydro_IIIA"/>
</dbReference>
<dbReference type="InterPro" id="IPR041492">
    <property type="entry name" value="HAD_2"/>
</dbReference>
<dbReference type="InterPro" id="IPR023214">
    <property type="entry name" value="HAD_sf"/>
</dbReference>
<dbReference type="InterPro" id="IPR023198">
    <property type="entry name" value="PGP-like_dom2"/>
</dbReference>
<dbReference type="InterPro" id="IPR023733">
    <property type="entry name" value="Pyrophosphatase_Ppax"/>
</dbReference>
<dbReference type="NCBIfam" id="TIGR01549">
    <property type="entry name" value="HAD-SF-IA-v1"/>
    <property type="match status" value="1"/>
</dbReference>
<dbReference type="NCBIfam" id="TIGR01509">
    <property type="entry name" value="HAD-SF-IA-v3"/>
    <property type="match status" value="1"/>
</dbReference>
<dbReference type="NCBIfam" id="TIGR01662">
    <property type="entry name" value="HAD-SF-IIIA"/>
    <property type="match status" value="1"/>
</dbReference>
<dbReference type="NCBIfam" id="NF009804">
    <property type="entry name" value="PRK13288.1"/>
    <property type="match status" value="1"/>
</dbReference>
<dbReference type="PANTHER" id="PTHR43434">
    <property type="entry name" value="PHOSPHOGLYCOLATE PHOSPHATASE"/>
    <property type="match status" value="1"/>
</dbReference>
<dbReference type="PANTHER" id="PTHR43434:SF26">
    <property type="entry name" value="PYROPHOSPHATASE PPAX"/>
    <property type="match status" value="1"/>
</dbReference>
<dbReference type="Pfam" id="PF13419">
    <property type="entry name" value="HAD_2"/>
    <property type="match status" value="1"/>
</dbReference>
<dbReference type="PRINTS" id="PR00413">
    <property type="entry name" value="HADHALOGNASE"/>
</dbReference>
<dbReference type="SFLD" id="SFLDG01135">
    <property type="entry name" value="C1.5.6:_HAD__Beta-PGM__Phospha"/>
    <property type="match status" value="1"/>
</dbReference>
<dbReference type="SFLD" id="SFLDG01129">
    <property type="entry name" value="C1.5:_HAD__Beta-PGM__Phosphata"/>
    <property type="match status" value="1"/>
</dbReference>
<dbReference type="SUPFAM" id="SSF56784">
    <property type="entry name" value="HAD-like"/>
    <property type="match status" value="1"/>
</dbReference>
<comment type="function">
    <text evidence="1">Hydrolyzes pyrophosphate formed during P-Ser-HPr dephosphorylation by HPrK/P. Might play a role in controlling the intracellular pyrophosphate pool.</text>
</comment>
<comment type="catalytic activity">
    <reaction evidence="1">
        <text>diphosphate + H2O = 2 phosphate + H(+)</text>
        <dbReference type="Rhea" id="RHEA:24576"/>
        <dbReference type="ChEBI" id="CHEBI:15377"/>
        <dbReference type="ChEBI" id="CHEBI:15378"/>
        <dbReference type="ChEBI" id="CHEBI:33019"/>
        <dbReference type="ChEBI" id="CHEBI:43474"/>
        <dbReference type="EC" id="3.6.1.1"/>
    </reaction>
</comment>
<comment type="cofactor">
    <cofactor evidence="1">
        <name>Mg(2+)</name>
        <dbReference type="ChEBI" id="CHEBI:18420"/>
    </cofactor>
</comment>
<comment type="similarity">
    <text evidence="1">Belongs to the HAD-like hydrolase superfamily. PpaX family.</text>
</comment>